<keyword id="KW-0031">Aminopeptidase</keyword>
<keyword id="KW-0378">Hydrolase</keyword>
<keyword id="KW-0645">Protease</keyword>
<keyword id="KW-1185">Reference proteome</keyword>
<organism>
    <name type="scientific">Gluconobacter oxydans (strain 621H)</name>
    <name type="common">Gluconobacter suboxydans</name>
    <dbReference type="NCBI Taxonomy" id="290633"/>
    <lineage>
        <taxon>Bacteria</taxon>
        <taxon>Pseudomonadati</taxon>
        <taxon>Pseudomonadota</taxon>
        <taxon>Alphaproteobacteria</taxon>
        <taxon>Acetobacterales</taxon>
        <taxon>Acetobacteraceae</taxon>
        <taxon>Gluconobacter</taxon>
    </lineage>
</organism>
<name>DAP_GLUOX</name>
<evidence type="ECO:0000255" key="1">
    <source>
        <dbReference type="HAMAP-Rule" id="MF_01960"/>
    </source>
</evidence>
<sequence length="525" mass="57398">MSDSFSARLEAAVSALPARFPGPGGAVAVLKDGEVLVRHGWGYANVERRIPFTPSTLFRMCSITKQFTCGTLLDLYDDPSELDADVDARLPQLDEPSPGMLHLAHNQSGLRDYWAVAMLHGAPIEGYFGDREARRVIDGTRTLQFQPGTSYSYVNQNFRLISDILQDRTGRSFAELLQTSIFNPVGMERAILAAETRAMPDGTVGYEGSVESGFRPAINNIWWTGDAGLGASLDDMIAWERFIDETRDAPDSLYRRLTVPVTFSDGQPAPYGFGLQRTKMFGRDVTMHGGALRGWRSHRLHVASERLSVVVMFNHMSAAQVASAQILAAALGVPYEPERSTQQPTALYGTYLERETGLSARIEPAPGGAKLRYLMVPELLEGISATRAEAGSVVVKAQETAEGAEAVMERPGENRTSILARCDETPGEDIAELAGVYRCEELDEAEVTIELAGGVVYGGFSGILGDGRMEMLQRLAKDVWVLPCPRALDHTAPGDWTLAFERQGGSVTAVRVGCWLARDLMYQRV</sequence>
<accession>Q5FRJ7</accession>
<reference key="1">
    <citation type="journal article" date="2005" name="Nat. Biotechnol.">
        <title>Complete genome sequence of the acetic acid bacterium Gluconobacter oxydans.</title>
        <authorList>
            <person name="Prust C."/>
            <person name="Hoffmeister M."/>
            <person name="Liesegang H."/>
            <person name="Wiezer A."/>
            <person name="Fricke W.F."/>
            <person name="Ehrenreich A."/>
            <person name="Gottschalk G."/>
            <person name="Deppenmeier U."/>
        </authorList>
    </citation>
    <scope>NUCLEOTIDE SEQUENCE [LARGE SCALE GENOMIC DNA]</scope>
    <source>
        <strain>621H</strain>
    </source>
</reference>
<protein>
    <recommendedName>
        <fullName evidence="1">D-aminopeptidase</fullName>
        <ecNumber evidence="1">3.4.11.19</ecNumber>
    </recommendedName>
</protein>
<dbReference type="EC" id="3.4.11.19" evidence="1"/>
<dbReference type="EMBL" id="CP000009">
    <property type="protein sequence ID" value="AAW60999.1"/>
    <property type="molecule type" value="Genomic_DNA"/>
</dbReference>
<dbReference type="RefSeq" id="WP_011252791.1">
    <property type="nucleotide sequence ID" value="NC_006677.1"/>
</dbReference>
<dbReference type="SMR" id="Q5FRJ7"/>
<dbReference type="STRING" id="290633.GOX1238"/>
<dbReference type="MEROPS" id="S12.002"/>
<dbReference type="KEGG" id="gox:GOX1238"/>
<dbReference type="eggNOG" id="COG1680">
    <property type="taxonomic scope" value="Bacteria"/>
</dbReference>
<dbReference type="HOGENOM" id="CLU_020027_0_4_5"/>
<dbReference type="Proteomes" id="UP000006375">
    <property type="component" value="Chromosome"/>
</dbReference>
<dbReference type="GO" id="GO:0004177">
    <property type="term" value="F:aminopeptidase activity"/>
    <property type="evidence" value="ECO:0007669"/>
    <property type="project" value="UniProtKB-UniRule"/>
</dbReference>
<dbReference type="GO" id="GO:0006508">
    <property type="term" value="P:proteolysis"/>
    <property type="evidence" value="ECO:0007669"/>
    <property type="project" value="UniProtKB-KW"/>
</dbReference>
<dbReference type="Gene3D" id="2.40.128.50">
    <property type="match status" value="2"/>
</dbReference>
<dbReference type="Gene3D" id="3.40.710.10">
    <property type="entry name" value="DD-peptidase/beta-lactamase superfamily"/>
    <property type="match status" value="1"/>
</dbReference>
<dbReference type="HAMAP" id="MF_01960">
    <property type="entry name" value="D_aminopeptidase"/>
    <property type="match status" value="1"/>
</dbReference>
<dbReference type="InterPro" id="IPR050491">
    <property type="entry name" value="Bact_CellWall_Synth/Modif"/>
</dbReference>
<dbReference type="InterPro" id="IPR001466">
    <property type="entry name" value="Beta-lactam-related"/>
</dbReference>
<dbReference type="InterPro" id="IPR012338">
    <property type="entry name" value="Beta-lactam/transpept-like"/>
</dbReference>
<dbReference type="InterPro" id="IPR027279">
    <property type="entry name" value="D_amino_pept/lipop_sf"/>
</dbReference>
<dbReference type="InterPro" id="IPR023645">
    <property type="entry name" value="DAP"/>
</dbReference>
<dbReference type="InterPro" id="IPR012856">
    <property type="entry name" value="DAP_B_dom"/>
</dbReference>
<dbReference type="NCBIfam" id="NF009622">
    <property type="entry name" value="PRK13128.1"/>
    <property type="match status" value="1"/>
</dbReference>
<dbReference type="PANTHER" id="PTHR46825:SF9">
    <property type="entry name" value="BETA-LACTAMASE-RELATED DOMAIN-CONTAINING PROTEIN"/>
    <property type="match status" value="1"/>
</dbReference>
<dbReference type="PANTHER" id="PTHR46825">
    <property type="entry name" value="D-ALANYL-D-ALANINE-CARBOXYPEPTIDASE/ENDOPEPTIDASE AMPH"/>
    <property type="match status" value="1"/>
</dbReference>
<dbReference type="Pfam" id="PF00144">
    <property type="entry name" value="Beta-lactamase"/>
    <property type="match status" value="1"/>
</dbReference>
<dbReference type="Pfam" id="PF07930">
    <property type="entry name" value="DAP_B"/>
    <property type="match status" value="1"/>
</dbReference>
<dbReference type="SUPFAM" id="SSF56601">
    <property type="entry name" value="beta-lactamase/transpeptidase-like"/>
    <property type="match status" value="1"/>
</dbReference>
<dbReference type="SUPFAM" id="SSF50886">
    <property type="entry name" value="D-aminopeptidase, middle and C-terminal domains"/>
    <property type="match status" value="1"/>
</dbReference>
<comment type="function">
    <text evidence="1">Hydrolyzes N-terminal residues in D-amino acid-containing peptides.</text>
</comment>
<comment type="catalytic activity">
    <reaction evidence="1">
        <text>Release of an N-terminal D-amino acid from a peptide, Xaa-|-Yaa-, in which Xaa is preferably D-Ala, D-Ser or D-Thr. D-amino acid amides and methyl esters also are hydrolyzed, as is glycine amide.</text>
        <dbReference type="EC" id="3.4.11.19"/>
    </reaction>
</comment>
<comment type="activity regulation">
    <text evidence="1">Inhibited by beta-lactam compounds such as 6-aminopenicillic acid, 7-aminocephalosporanic acid, benzylpenicillin and ampicillin. Inhibited by p-chloromercuribenzoate.</text>
</comment>
<comment type="subunit">
    <text evidence="1">Homodimer.</text>
</comment>
<comment type="similarity">
    <text evidence="1">Belongs to the peptidase S12 family.</text>
</comment>
<feature type="chain" id="PRO_0000250695" description="D-aminopeptidase">
    <location>
        <begin position="1"/>
        <end position="525"/>
    </location>
</feature>
<feature type="region of interest" description="Important for specificity" evidence="1">
    <location>
        <begin position="485"/>
        <end position="495"/>
    </location>
</feature>
<feature type="active site" description="Nucleophile" evidence="1">
    <location>
        <position position="62"/>
    </location>
</feature>
<feature type="active site" description="Proton donor/acceptor" evidence="1">
    <location>
        <position position="65"/>
    </location>
</feature>
<feature type="binding site" evidence="1">
    <location>
        <position position="489"/>
    </location>
    <ligand>
        <name>substrate</name>
    </ligand>
</feature>
<proteinExistence type="inferred from homology"/>
<gene>
    <name evidence="1" type="primary">dap</name>
    <name type="ordered locus">GOX1238</name>
</gene>